<protein>
    <recommendedName>
        <fullName evidence="1">3-isopropylmalate dehydrogenase</fullName>
        <ecNumber evidence="1">1.1.1.85</ecNumber>
    </recommendedName>
    <alternativeName>
        <fullName evidence="1">3-IPM-DH</fullName>
    </alternativeName>
    <alternativeName>
        <fullName evidence="1">Beta-IPM dehydrogenase</fullName>
        <shortName evidence="1">IMDH</shortName>
    </alternativeName>
</protein>
<evidence type="ECO:0000255" key="1">
    <source>
        <dbReference type="HAMAP-Rule" id="MF_01033"/>
    </source>
</evidence>
<keyword id="KW-0028">Amino-acid biosynthesis</keyword>
<keyword id="KW-0100">Branched-chain amino acid biosynthesis</keyword>
<keyword id="KW-0963">Cytoplasm</keyword>
<keyword id="KW-0432">Leucine biosynthesis</keyword>
<keyword id="KW-0460">Magnesium</keyword>
<keyword id="KW-0464">Manganese</keyword>
<keyword id="KW-0479">Metal-binding</keyword>
<keyword id="KW-0520">NAD</keyword>
<keyword id="KW-0560">Oxidoreductase</keyword>
<keyword id="KW-1185">Reference proteome</keyword>
<organism>
    <name type="scientific">Nitratidesulfovibrio vulgaris (strain ATCC 29579 / DSM 644 / CCUG 34227 / NCIMB 8303 / VKM B-1760 / Hildenborough)</name>
    <name type="common">Desulfovibrio vulgaris</name>
    <dbReference type="NCBI Taxonomy" id="882"/>
    <lineage>
        <taxon>Bacteria</taxon>
        <taxon>Pseudomonadati</taxon>
        <taxon>Thermodesulfobacteriota</taxon>
        <taxon>Desulfovibrionia</taxon>
        <taxon>Desulfovibrionales</taxon>
        <taxon>Desulfovibrionaceae</taxon>
        <taxon>Nitratidesulfovibrio</taxon>
    </lineage>
</organism>
<dbReference type="EC" id="1.1.1.85" evidence="1"/>
<dbReference type="EMBL" id="AE017285">
    <property type="protein sequence ID" value="AAS97456.1"/>
    <property type="molecule type" value="Genomic_DNA"/>
</dbReference>
<dbReference type="RefSeq" id="WP_010940244.1">
    <property type="nucleotide sequence ID" value="NC_002937.3"/>
</dbReference>
<dbReference type="RefSeq" id="YP_012196.1">
    <property type="nucleotide sequence ID" value="NC_002937.3"/>
</dbReference>
<dbReference type="SMR" id="Q726X1"/>
<dbReference type="IntAct" id="Q726X1">
    <property type="interactions" value="2"/>
</dbReference>
<dbReference type="STRING" id="882.DVU_2985"/>
<dbReference type="PaxDb" id="882-DVU_2985"/>
<dbReference type="EnsemblBacteria" id="AAS97456">
    <property type="protein sequence ID" value="AAS97456"/>
    <property type="gene ID" value="DVU_2985"/>
</dbReference>
<dbReference type="KEGG" id="dvu:DVU_2985"/>
<dbReference type="PATRIC" id="fig|882.5.peg.2702"/>
<dbReference type="eggNOG" id="COG0473">
    <property type="taxonomic scope" value="Bacteria"/>
</dbReference>
<dbReference type="HOGENOM" id="CLU_031953_0_3_7"/>
<dbReference type="OrthoDB" id="9806254at2"/>
<dbReference type="PhylomeDB" id="Q726X1"/>
<dbReference type="UniPathway" id="UPA00048">
    <property type="reaction ID" value="UER00072"/>
</dbReference>
<dbReference type="Proteomes" id="UP000002194">
    <property type="component" value="Chromosome"/>
</dbReference>
<dbReference type="GO" id="GO:0005829">
    <property type="term" value="C:cytosol"/>
    <property type="evidence" value="ECO:0007669"/>
    <property type="project" value="TreeGrafter"/>
</dbReference>
<dbReference type="GO" id="GO:0003862">
    <property type="term" value="F:3-isopropylmalate dehydrogenase activity"/>
    <property type="evidence" value="ECO:0007669"/>
    <property type="project" value="UniProtKB-UniRule"/>
</dbReference>
<dbReference type="GO" id="GO:0000287">
    <property type="term" value="F:magnesium ion binding"/>
    <property type="evidence" value="ECO:0007669"/>
    <property type="project" value="InterPro"/>
</dbReference>
<dbReference type="GO" id="GO:0051287">
    <property type="term" value="F:NAD binding"/>
    <property type="evidence" value="ECO:0007669"/>
    <property type="project" value="InterPro"/>
</dbReference>
<dbReference type="GO" id="GO:0009098">
    <property type="term" value="P:L-leucine biosynthetic process"/>
    <property type="evidence" value="ECO:0007669"/>
    <property type="project" value="UniProtKB-UniRule"/>
</dbReference>
<dbReference type="FunFam" id="3.40.718.10:FF:000028">
    <property type="entry name" value="3-isopropylmalate dehydrogenase"/>
    <property type="match status" value="1"/>
</dbReference>
<dbReference type="Gene3D" id="3.40.718.10">
    <property type="entry name" value="Isopropylmalate Dehydrogenase"/>
    <property type="match status" value="1"/>
</dbReference>
<dbReference type="HAMAP" id="MF_01033">
    <property type="entry name" value="LeuB_type1"/>
    <property type="match status" value="1"/>
</dbReference>
<dbReference type="InterPro" id="IPR019818">
    <property type="entry name" value="IsoCit/isopropylmalate_DH_CS"/>
</dbReference>
<dbReference type="InterPro" id="IPR024084">
    <property type="entry name" value="IsoPropMal-DH-like_dom"/>
</dbReference>
<dbReference type="InterPro" id="IPR004429">
    <property type="entry name" value="Isopropylmalate_DH"/>
</dbReference>
<dbReference type="NCBIfam" id="TIGR00169">
    <property type="entry name" value="leuB"/>
    <property type="match status" value="1"/>
</dbReference>
<dbReference type="PANTHER" id="PTHR42979">
    <property type="entry name" value="3-ISOPROPYLMALATE DEHYDROGENASE"/>
    <property type="match status" value="1"/>
</dbReference>
<dbReference type="PANTHER" id="PTHR42979:SF1">
    <property type="entry name" value="3-ISOPROPYLMALATE DEHYDROGENASE"/>
    <property type="match status" value="1"/>
</dbReference>
<dbReference type="Pfam" id="PF00180">
    <property type="entry name" value="Iso_dh"/>
    <property type="match status" value="1"/>
</dbReference>
<dbReference type="SMART" id="SM01329">
    <property type="entry name" value="Iso_dh"/>
    <property type="match status" value="1"/>
</dbReference>
<dbReference type="SUPFAM" id="SSF53659">
    <property type="entry name" value="Isocitrate/Isopropylmalate dehydrogenase-like"/>
    <property type="match status" value="1"/>
</dbReference>
<dbReference type="PROSITE" id="PS00470">
    <property type="entry name" value="IDH_IMDH"/>
    <property type="match status" value="1"/>
</dbReference>
<proteinExistence type="inferred from homology"/>
<feature type="chain" id="PRO_0000083689" description="3-isopropylmalate dehydrogenase">
    <location>
        <begin position="1"/>
        <end position="357"/>
    </location>
</feature>
<feature type="binding site" evidence="1">
    <location>
        <begin position="76"/>
        <end position="89"/>
    </location>
    <ligand>
        <name>NAD(+)</name>
        <dbReference type="ChEBI" id="CHEBI:57540"/>
    </ligand>
</feature>
<feature type="binding site" evidence="1">
    <location>
        <position position="96"/>
    </location>
    <ligand>
        <name>substrate</name>
    </ligand>
</feature>
<feature type="binding site" evidence="1">
    <location>
        <position position="106"/>
    </location>
    <ligand>
        <name>substrate</name>
    </ligand>
</feature>
<feature type="binding site" evidence="1">
    <location>
        <position position="135"/>
    </location>
    <ligand>
        <name>substrate</name>
    </ligand>
</feature>
<feature type="binding site" evidence="1">
    <location>
        <position position="224"/>
    </location>
    <ligand>
        <name>Mg(2+)</name>
        <dbReference type="ChEBI" id="CHEBI:18420"/>
    </ligand>
</feature>
<feature type="binding site" evidence="1">
    <location>
        <position position="224"/>
    </location>
    <ligand>
        <name>substrate</name>
    </ligand>
</feature>
<feature type="binding site" evidence="1">
    <location>
        <position position="248"/>
    </location>
    <ligand>
        <name>Mg(2+)</name>
        <dbReference type="ChEBI" id="CHEBI:18420"/>
    </ligand>
</feature>
<feature type="binding site" evidence="1">
    <location>
        <position position="252"/>
    </location>
    <ligand>
        <name>Mg(2+)</name>
        <dbReference type="ChEBI" id="CHEBI:18420"/>
    </ligand>
</feature>
<feature type="binding site" evidence="1">
    <location>
        <begin position="282"/>
        <end position="294"/>
    </location>
    <ligand>
        <name>NAD(+)</name>
        <dbReference type="ChEBI" id="CHEBI:57540"/>
    </ligand>
</feature>
<feature type="site" description="Important for catalysis" evidence="1">
    <location>
        <position position="142"/>
    </location>
</feature>
<feature type="site" description="Important for catalysis" evidence="1">
    <location>
        <position position="192"/>
    </location>
</feature>
<gene>
    <name evidence="1" type="primary">leuB</name>
    <name type="ordered locus">DVU_2985</name>
</gene>
<comment type="function">
    <text evidence="1">Catalyzes the oxidation of 3-carboxy-2-hydroxy-4-methylpentanoate (3-isopropylmalate) to 3-carboxy-4-methyl-2-oxopentanoate. The product decarboxylates to 4-methyl-2 oxopentanoate.</text>
</comment>
<comment type="catalytic activity">
    <reaction evidence="1">
        <text>(2R,3S)-3-isopropylmalate + NAD(+) = 4-methyl-2-oxopentanoate + CO2 + NADH</text>
        <dbReference type="Rhea" id="RHEA:32271"/>
        <dbReference type="ChEBI" id="CHEBI:16526"/>
        <dbReference type="ChEBI" id="CHEBI:17865"/>
        <dbReference type="ChEBI" id="CHEBI:35121"/>
        <dbReference type="ChEBI" id="CHEBI:57540"/>
        <dbReference type="ChEBI" id="CHEBI:57945"/>
        <dbReference type="EC" id="1.1.1.85"/>
    </reaction>
</comment>
<comment type="cofactor">
    <cofactor evidence="1">
        <name>Mg(2+)</name>
        <dbReference type="ChEBI" id="CHEBI:18420"/>
    </cofactor>
    <cofactor evidence="1">
        <name>Mn(2+)</name>
        <dbReference type="ChEBI" id="CHEBI:29035"/>
    </cofactor>
    <text evidence="1">Binds 1 Mg(2+) or Mn(2+) ion per subunit.</text>
</comment>
<comment type="pathway">
    <text evidence="1">Amino-acid biosynthesis; L-leucine biosynthesis; L-leucine from 3-methyl-2-oxobutanoate: step 3/4.</text>
</comment>
<comment type="subunit">
    <text evidence="1">Homodimer.</text>
</comment>
<comment type="subcellular location">
    <subcellularLocation>
        <location evidence="1">Cytoplasm</location>
    </subcellularLocation>
</comment>
<comment type="similarity">
    <text evidence="1">Belongs to the isocitrate and isopropylmalate dehydrogenases family. LeuB type 1 subfamily.</text>
</comment>
<sequence length="357" mass="37692">MHMNICLLPGDGIGPEIVAQGTKVLDAVARRFGHTVSTSSALIGGAAIDATGSPLPDATVEACRTSDAVLLGAVGGPKWDDLPSEKRPEKGLLGIRKALGLFANLRPAALFPELAGACLLRADIAAAGLDLVVVRELTGDVYFGQPAGIETRDGLRTGFNTMIYDEDEVRRIARVAFDTARARKRRVCSVDKANVLATSRLWREVVEEVARDYPDVELSHMYVDNAAMQLVRWPAQFDVIVTGNLFGDILSDEAAVITGSIGMLPSASMGSGGPALFEPIHGSAPDIAGQDKANPIATILSVGMMLRLGFGLAAEADAIDAAVRRVLAEGYRTGDIMENGRTLVGTVSMGNLIAERI</sequence>
<name>LEU3_NITV2</name>
<reference key="1">
    <citation type="journal article" date="2004" name="Nat. Biotechnol.">
        <title>The genome sequence of the anaerobic, sulfate-reducing bacterium Desulfovibrio vulgaris Hildenborough.</title>
        <authorList>
            <person name="Heidelberg J.F."/>
            <person name="Seshadri R."/>
            <person name="Haveman S.A."/>
            <person name="Hemme C.L."/>
            <person name="Paulsen I.T."/>
            <person name="Kolonay J.F."/>
            <person name="Eisen J.A."/>
            <person name="Ward N.L."/>
            <person name="Methe B.A."/>
            <person name="Brinkac L.M."/>
            <person name="Daugherty S.C."/>
            <person name="DeBoy R.T."/>
            <person name="Dodson R.J."/>
            <person name="Durkin A.S."/>
            <person name="Madupu R."/>
            <person name="Nelson W.C."/>
            <person name="Sullivan S.A."/>
            <person name="Fouts D.E."/>
            <person name="Haft D.H."/>
            <person name="Selengut J."/>
            <person name="Peterson J.D."/>
            <person name="Davidsen T.M."/>
            <person name="Zafar N."/>
            <person name="Zhou L."/>
            <person name="Radune D."/>
            <person name="Dimitrov G."/>
            <person name="Hance M."/>
            <person name="Tran K."/>
            <person name="Khouri H.M."/>
            <person name="Gill J."/>
            <person name="Utterback T.R."/>
            <person name="Feldblyum T.V."/>
            <person name="Wall J.D."/>
            <person name="Voordouw G."/>
            <person name="Fraser C.M."/>
        </authorList>
    </citation>
    <scope>NUCLEOTIDE SEQUENCE [LARGE SCALE GENOMIC DNA]</scope>
    <source>
        <strain>ATCC 29579 / DSM 644 / CCUG 34227 / NCIMB 8303 / VKM B-1760 / Hildenborough</strain>
    </source>
</reference>
<accession>Q726X1</accession>